<name>6PGD1_ARATH</name>
<sequence length="487" mass="53378">MESAALSRIGLAGLAVMGQNLALNIAEKGFPISVYNRTTSKVDETLDRAAVEGNLPVSGQYSPRDFVLSIQRPRSLIILVKAGAPVDQTIDAFSEYMEPGDCIIDGGNEWYQNTERRISEAEQKGLLYLGMGVSGGEEGARNGPSLMPGGSFQAYDNIKDILEKVAAQVEDGPCVTYIGEGGSGNFVKMVHNGIEYGDMQLISEAYDVLKNVGGLSNEELAEIFTEWNSGELESFLVEITSDIFRVKDEFGDGELVDKILDKTGMKGTGKWTVQQAAELSVAAPTIAASLDCRYLSGLKDERENAAKVLREAGLKEEIGSASSGIDKKRLVDDVRQALYASKICSYAQGMNLLRAKSLEKSWNLNFGELARIWKGGCIIRAVFLDRIKKAYQRNPDLASLVVDPEFAKEMVQRQAAWRRVVGLAVSAGISTPGMCASLAYFDTYRRARLPANLVQAQRDLFGAHTYERTDRPGAYHTEWTKLARKNH</sequence>
<accession>Q9SH69</accession>
<feature type="chain" id="PRO_0000421098" description="6-phosphogluconate dehydrogenase, decarboxylating 1, chloroplastic">
    <location>
        <begin position="1"/>
        <end position="487"/>
    </location>
</feature>
<feature type="active site" description="Proton acceptor" evidence="1">
    <location>
        <position position="188"/>
    </location>
</feature>
<feature type="active site" description="Proton donor" evidence="1">
    <location>
        <position position="195"/>
    </location>
</feature>
<feature type="binding site" evidence="1">
    <location>
        <begin position="13"/>
        <end position="18"/>
    </location>
    <ligand>
        <name>NADP(+)</name>
        <dbReference type="ChEBI" id="CHEBI:58349"/>
    </ligand>
</feature>
<feature type="binding site" evidence="1">
    <location>
        <begin position="36"/>
        <end position="38"/>
    </location>
    <ligand>
        <name>NADP(+)</name>
        <dbReference type="ChEBI" id="CHEBI:58349"/>
    </ligand>
</feature>
<feature type="binding site" evidence="1">
    <location>
        <begin position="80"/>
        <end position="82"/>
    </location>
    <ligand>
        <name>NADP(+)</name>
        <dbReference type="ChEBI" id="CHEBI:58349"/>
    </ligand>
</feature>
<feature type="binding site" evidence="1">
    <location>
        <position position="108"/>
    </location>
    <ligand>
        <name>NADP(+)</name>
        <dbReference type="ChEBI" id="CHEBI:58349"/>
    </ligand>
</feature>
<feature type="binding site" description="in other chain" evidence="1">
    <location>
        <position position="108"/>
    </location>
    <ligand>
        <name>substrate</name>
        <note>ligand shared between dimeric partners</note>
    </ligand>
</feature>
<feature type="binding site" description="in other chain" evidence="1">
    <location>
        <begin position="134"/>
        <end position="136"/>
    </location>
    <ligand>
        <name>substrate</name>
        <note>ligand shared between dimeric partners</note>
    </ligand>
</feature>
<feature type="binding site" description="in other chain" evidence="1">
    <location>
        <begin position="191"/>
        <end position="192"/>
    </location>
    <ligand>
        <name>substrate</name>
        <note>ligand shared between dimeric partners</note>
    </ligand>
</feature>
<feature type="binding site" description="in other chain" evidence="1">
    <location>
        <position position="196"/>
    </location>
    <ligand>
        <name>substrate</name>
        <note>ligand shared between dimeric partners</note>
    </ligand>
</feature>
<feature type="binding site" description="in other chain" evidence="1">
    <location>
        <position position="266"/>
    </location>
    <ligand>
        <name>substrate</name>
        <note>ligand shared between dimeric partners</note>
    </ligand>
</feature>
<feature type="binding site" description="in other chain" evidence="1">
    <location>
        <position position="293"/>
    </location>
    <ligand>
        <name>substrate</name>
        <note>ligand shared between dimeric partners</note>
    </ligand>
</feature>
<feature type="binding site" evidence="1">
    <location>
        <position position="458"/>
    </location>
    <ligand>
        <name>substrate</name>
        <note>ligand shared between dimeric partners</note>
    </ligand>
</feature>
<feature type="binding site" evidence="1">
    <location>
        <position position="464"/>
    </location>
    <ligand>
        <name>substrate</name>
        <note>ligand shared between dimeric partners</note>
    </ligand>
</feature>
<feature type="modified residue" description="N-acetylmethionine" evidence="9">
    <location>
        <position position="1"/>
    </location>
</feature>
<dbReference type="EC" id="1.1.1.44" evidence="2"/>
<dbReference type="EMBL" id="AC007764">
    <property type="protein sequence ID" value="AAF24560.1"/>
    <property type="molecule type" value="Genomic_DNA"/>
</dbReference>
<dbReference type="EMBL" id="CP002684">
    <property type="protein sequence ID" value="AEE34207.1"/>
    <property type="molecule type" value="Genomic_DNA"/>
</dbReference>
<dbReference type="EMBL" id="BT004568">
    <property type="protein sequence ID" value="AAO42814.1"/>
    <property type="molecule type" value="mRNA"/>
</dbReference>
<dbReference type="EMBL" id="AK227596">
    <property type="protein sequence ID" value="BAE99587.1"/>
    <property type="molecule type" value="mRNA"/>
</dbReference>
<dbReference type="RefSeq" id="NP_176601.1">
    <property type="nucleotide sequence ID" value="NM_105093.3"/>
</dbReference>
<dbReference type="SMR" id="Q9SH69"/>
<dbReference type="BioGRID" id="27945">
    <property type="interactions" value="18"/>
</dbReference>
<dbReference type="FunCoup" id="Q9SH69">
    <property type="interactions" value="2709"/>
</dbReference>
<dbReference type="IntAct" id="Q9SH69">
    <property type="interactions" value="2"/>
</dbReference>
<dbReference type="STRING" id="3702.Q9SH69"/>
<dbReference type="iPTMnet" id="Q9SH69"/>
<dbReference type="PaxDb" id="3702-AT1G64190.1"/>
<dbReference type="ProteomicsDB" id="244553"/>
<dbReference type="EnsemblPlants" id="AT1G64190.1">
    <property type="protein sequence ID" value="AT1G64190.1"/>
    <property type="gene ID" value="AT1G64190"/>
</dbReference>
<dbReference type="GeneID" id="842724"/>
<dbReference type="Gramene" id="AT1G64190.1">
    <property type="protein sequence ID" value="AT1G64190.1"/>
    <property type="gene ID" value="AT1G64190"/>
</dbReference>
<dbReference type="KEGG" id="ath:AT1G64190"/>
<dbReference type="Araport" id="AT1G64190"/>
<dbReference type="TAIR" id="AT1G64190">
    <property type="gene designation" value="PGD1"/>
</dbReference>
<dbReference type="eggNOG" id="KOG2653">
    <property type="taxonomic scope" value="Eukaryota"/>
</dbReference>
<dbReference type="HOGENOM" id="CLU_024540_4_2_1"/>
<dbReference type="InParanoid" id="Q9SH69"/>
<dbReference type="OMA" id="QALYMGK"/>
<dbReference type="PhylomeDB" id="Q9SH69"/>
<dbReference type="BioCyc" id="ARA:AT1G64190-MONOMER"/>
<dbReference type="BRENDA" id="1.1.1.44">
    <property type="organism ID" value="399"/>
</dbReference>
<dbReference type="UniPathway" id="UPA00115">
    <property type="reaction ID" value="UER00410"/>
</dbReference>
<dbReference type="CD-CODE" id="4299E36E">
    <property type="entry name" value="Nucleolus"/>
</dbReference>
<dbReference type="PRO" id="PR:Q9SH69"/>
<dbReference type="Proteomes" id="UP000006548">
    <property type="component" value="Chromosome 1"/>
</dbReference>
<dbReference type="ExpressionAtlas" id="Q9SH69">
    <property type="expression patterns" value="baseline and differential"/>
</dbReference>
<dbReference type="GO" id="GO:0009507">
    <property type="term" value="C:chloroplast"/>
    <property type="evidence" value="ECO:0007005"/>
    <property type="project" value="TAIR"/>
</dbReference>
<dbReference type="GO" id="GO:0009570">
    <property type="term" value="C:chloroplast stroma"/>
    <property type="evidence" value="ECO:0007005"/>
    <property type="project" value="TAIR"/>
</dbReference>
<dbReference type="GO" id="GO:0005829">
    <property type="term" value="C:cytosol"/>
    <property type="evidence" value="ECO:0000314"/>
    <property type="project" value="TAIR"/>
</dbReference>
<dbReference type="GO" id="GO:0009536">
    <property type="term" value="C:plastid"/>
    <property type="evidence" value="ECO:0000314"/>
    <property type="project" value="TAIR"/>
</dbReference>
<dbReference type="GO" id="GO:0099503">
    <property type="term" value="C:secretory vesicle"/>
    <property type="evidence" value="ECO:0007005"/>
    <property type="project" value="TAIR"/>
</dbReference>
<dbReference type="GO" id="GO:0050661">
    <property type="term" value="F:NADP binding"/>
    <property type="evidence" value="ECO:0007669"/>
    <property type="project" value="InterPro"/>
</dbReference>
<dbReference type="GO" id="GO:0008114">
    <property type="term" value="F:phosphogluconate 2-dehydrogenase activity"/>
    <property type="evidence" value="ECO:0000314"/>
    <property type="project" value="TAIR"/>
</dbReference>
<dbReference type="GO" id="GO:0004616">
    <property type="term" value="F:phosphogluconate dehydrogenase (decarboxylating) activity"/>
    <property type="evidence" value="ECO:0007669"/>
    <property type="project" value="UniProtKB-EC"/>
</dbReference>
<dbReference type="GO" id="GO:0019521">
    <property type="term" value="P:D-gluconate metabolic process"/>
    <property type="evidence" value="ECO:0007669"/>
    <property type="project" value="UniProtKB-KW"/>
</dbReference>
<dbReference type="GO" id="GO:0009051">
    <property type="term" value="P:pentose-phosphate shunt, oxidative branch"/>
    <property type="evidence" value="ECO:0000316"/>
    <property type="project" value="TAIR"/>
</dbReference>
<dbReference type="FunFam" id="1.10.1040.10:FF:000002">
    <property type="entry name" value="6-phosphogluconate dehydrogenase, decarboxylating"/>
    <property type="match status" value="1"/>
</dbReference>
<dbReference type="FunFam" id="1.20.5.320:FF:000001">
    <property type="entry name" value="6-phosphogluconate dehydrogenase, decarboxylating"/>
    <property type="match status" value="1"/>
</dbReference>
<dbReference type="FunFam" id="3.40.50.720:FF:000007">
    <property type="entry name" value="6-phosphogluconate dehydrogenase, decarboxylating"/>
    <property type="match status" value="1"/>
</dbReference>
<dbReference type="Gene3D" id="1.20.5.320">
    <property type="entry name" value="6-Phosphogluconate Dehydrogenase, domain 3"/>
    <property type="match status" value="1"/>
</dbReference>
<dbReference type="Gene3D" id="1.10.1040.10">
    <property type="entry name" value="N-(1-d-carboxylethyl)-l-norvaline Dehydrogenase, domain 2"/>
    <property type="match status" value="1"/>
</dbReference>
<dbReference type="Gene3D" id="3.40.50.720">
    <property type="entry name" value="NAD(P)-binding Rossmann-like Domain"/>
    <property type="match status" value="1"/>
</dbReference>
<dbReference type="InterPro" id="IPR008927">
    <property type="entry name" value="6-PGluconate_DH-like_C_sf"/>
</dbReference>
<dbReference type="InterPro" id="IPR013328">
    <property type="entry name" value="6PGD_dom2"/>
</dbReference>
<dbReference type="InterPro" id="IPR006114">
    <property type="entry name" value="6PGDH_C"/>
</dbReference>
<dbReference type="InterPro" id="IPR006113">
    <property type="entry name" value="6PGDH_Gnd/GntZ"/>
</dbReference>
<dbReference type="InterPro" id="IPR006115">
    <property type="entry name" value="6PGDH_NADP-bd"/>
</dbReference>
<dbReference type="InterPro" id="IPR036291">
    <property type="entry name" value="NAD(P)-bd_dom_sf"/>
</dbReference>
<dbReference type="InterPro" id="IPR006183">
    <property type="entry name" value="Pgluconate_DH"/>
</dbReference>
<dbReference type="NCBIfam" id="TIGR00873">
    <property type="entry name" value="gnd"/>
    <property type="match status" value="1"/>
</dbReference>
<dbReference type="NCBIfam" id="NF006765">
    <property type="entry name" value="PRK09287.1"/>
    <property type="match status" value="1"/>
</dbReference>
<dbReference type="PANTHER" id="PTHR11811">
    <property type="entry name" value="6-PHOSPHOGLUCONATE DEHYDROGENASE"/>
    <property type="match status" value="1"/>
</dbReference>
<dbReference type="Pfam" id="PF00393">
    <property type="entry name" value="6PGD"/>
    <property type="match status" value="1"/>
</dbReference>
<dbReference type="Pfam" id="PF03446">
    <property type="entry name" value="NAD_binding_2"/>
    <property type="match status" value="1"/>
</dbReference>
<dbReference type="PIRSF" id="PIRSF000109">
    <property type="entry name" value="6PGD"/>
    <property type="match status" value="1"/>
</dbReference>
<dbReference type="PRINTS" id="PR00076">
    <property type="entry name" value="6PGDHDRGNASE"/>
</dbReference>
<dbReference type="SMART" id="SM01350">
    <property type="entry name" value="6PGD"/>
    <property type="match status" value="1"/>
</dbReference>
<dbReference type="SUPFAM" id="SSF48179">
    <property type="entry name" value="6-phosphogluconate dehydrogenase C-terminal domain-like"/>
    <property type="match status" value="1"/>
</dbReference>
<dbReference type="SUPFAM" id="SSF51735">
    <property type="entry name" value="NAD(P)-binding Rossmann-fold domains"/>
    <property type="match status" value="1"/>
</dbReference>
<comment type="function">
    <text evidence="2">Catalyzes the oxidative decarboxylation of 6-phosphogluconate to ribulose 5-phosphate and CO(2), with concomitant reduction of NADP to NADPH.</text>
</comment>
<comment type="catalytic activity">
    <reaction evidence="2">
        <text>6-phospho-D-gluconate + NADP(+) = D-ribulose 5-phosphate + CO2 + NADPH</text>
        <dbReference type="Rhea" id="RHEA:10116"/>
        <dbReference type="ChEBI" id="CHEBI:16526"/>
        <dbReference type="ChEBI" id="CHEBI:57783"/>
        <dbReference type="ChEBI" id="CHEBI:58121"/>
        <dbReference type="ChEBI" id="CHEBI:58349"/>
        <dbReference type="ChEBI" id="CHEBI:58759"/>
        <dbReference type="EC" id="1.1.1.44"/>
    </reaction>
</comment>
<comment type="pathway">
    <text evidence="6">Carbohydrate degradation; pentose phosphate pathway; D-ribulose 5-phosphate from D-glucose 6-phosphate (oxidative stage): step 3/3.</text>
</comment>
<comment type="subunit">
    <text evidence="4">Forms homodimer (PubMed:27366940). Forms heterodimers with PGD2 or PGD3 (PubMed:27366940).</text>
</comment>
<comment type="subcellular location">
    <subcellularLocation>
        <location evidence="3">Plastid</location>
        <location evidence="3">Chloroplast</location>
    </subcellularLocation>
    <subcellularLocation>
        <location evidence="3">Cytoplasm</location>
        <location evidence="3">Cytosol</location>
    </subcellularLocation>
</comment>
<comment type="similarity">
    <text evidence="6">Belongs to the 6-phosphogluconate dehydrogenase family.</text>
</comment>
<gene>
    <name evidence="5" type="primary">PGD1</name>
    <name evidence="7" type="ordered locus">At1g64190</name>
    <name evidence="8" type="ORF">F22C12.5</name>
</gene>
<keyword id="KW-0007">Acetylation</keyword>
<keyword id="KW-0150">Chloroplast</keyword>
<keyword id="KW-0963">Cytoplasm</keyword>
<keyword id="KW-0311">Gluconate utilization</keyword>
<keyword id="KW-0521">NADP</keyword>
<keyword id="KW-0560">Oxidoreductase</keyword>
<keyword id="KW-0570">Pentose shunt</keyword>
<keyword id="KW-0934">Plastid</keyword>
<keyword id="KW-1185">Reference proteome</keyword>
<proteinExistence type="evidence at protein level"/>
<organism>
    <name type="scientific">Arabidopsis thaliana</name>
    <name type="common">Mouse-ear cress</name>
    <dbReference type="NCBI Taxonomy" id="3702"/>
    <lineage>
        <taxon>Eukaryota</taxon>
        <taxon>Viridiplantae</taxon>
        <taxon>Streptophyta</taxon>
        <taxon>Embryophyta</taxon>
        <taxon>Tracheophyta</taxon>
        <taxon>Spermatophyta</taxon>
        <taxon>Magnoliopsida</taxon>
        <taxon>eudicotyledons</taxon>
        <taxon>Gunneridae</taxon>
        <taxon>Pentapetalae</taxon>
        <taxon>rosids</taxon>
        <taxon>malvids</taxon>
        <taxon>Brassicales</taxon>
        <taxon>Brassicaceae</taxon>
        <taxon>Camelineae</taxon>
        <taxon>Arabidopsis</taxon>
    </lineage>
</organism>
<protein>
    <recommendedName>
        <fullName evidence="6">6-phosphogluconate dehydrogenase, decarboxylating 1, chloroplastic</fullName>
        <ecNumber evidence="2">1.1.1.44</ecNumber>
    </recommendedName>
</protein>
<reference key="1">
    <citation type="journal article" date="2000" name="Nature">
        <title>Sequence and analysis of chromosome 1 of the plant Arabidopsis thaliana.</title>
        <authorList>
            <person name="Theologis A."/>
            <person name="Ecker J.R."/>
            <person name="Palm C.J."/>
            <person name="Federspiel N.A."/>
            <person name="Kaul S."/>
            <person name="White O."/>
            <person name="Alonso J."/>
            <person name="Altafi H."/>
            <person name="Araujo R."/>
            <person name="Bowman C.L."/>
            <person name="Brooks S.Y."/>
            <person name="Buehler E."/>
            <person name="Chan A."/>
            <person name="Chao Q."/>
            <person name="Chen H."/>
            <person name="Cheuk R.F."/>
            <person name="Chin C.W."/>
            <person name="Chung M.K."/>
            <person name="Conn L."/>
            <person name="Conway A.B."/>
            <person name="Conway A.R."/>
            <person name="Creasy T.H."/>
            <person name="Dewar K."/>
            <person name="Dunn P."/>
            <person name="Etgu P."/>
            <person name="Feldblyum T.V."/>
            <person name="Feng J.-D."/>
            <person name="Fong B."/>
            <person name="Fujii C.Y."/>
            <person name="Gill J.E."/>
            <person name="Goldsmith A.D."/>
            <person name="Haas B."/>
            <person name="Hansen N.F."/>
            <person name="Hughes B."/>
            <person name="Huizar L."/>
            <person name="Hunter J.L."/>
            <person name="Jenkins J."/>
            <person name="Johnson-Hopson C."/>
            <person name="Khan S."/>
            <person name="Khaykin E."/>
            <person name="Kim C.J."/>
            <person name="Koo H.L."/>
            <person name="Kremenetskaia I."/>
            <person name="Kurtz D.B."/>
            <person name="Kwan A."/>
            <person name="Lam B."/>
            <person name="Langin-Hooper S."/>
            <person name="Lee A."/>
            <person name="Lee J.M."/>
            <person name="Lenz C.A."/>
            <person name="Li J.H."/>
            <person name="Li Y.-P."/>
            <person name="Lin X."/>
            <person name="Liu S.X."/>
            <person name="Liu Z.A."/>
            <person name="Luros J.S."/>
            <person name="Maiti R."/>
            <person name="Marziali A."/>
            <person name="Militscher J."/>
            <person name="Miranda M."/>
            <person name="Nguyen M."/>
            <person name="Nierman W.C."/>
            <person name="Osborne B.I."/>
            <person name="Pai G."/>
            <person name="Peterson J."/>
            <person name="Pham P.K."/>
            <person name="Rizzo M."/>
            <person name="Rooney T."/>
            <person name="Rowley D."/>
            <person name="Sakano H."/>
            <person name="Salzberg S.L."/>
            <person name="Schwartz J.R."/>
            <person name="Shinn P."/>
            <person name="Southwick A.M."/>
            <person name="Sun H."/>
            <person name="Tallon L.J."/>
            <person name="Tambunga G."/>
            <person name="Toriumi M.J."/>
            <person name="Town C.D."/>
            <person name="Utterback T."/>
            <person name="Van Aken S."/>
            <person name="Vaysberg M."/>
            <person name="Vysotskaia V.S."/>
            <person name="Walker M."/>
            <person name="Wu D."/>
            <person name="Yu G."/>
            <person name="Fraser C.M."/>
            <person name="Venter J.C."/>
            <person name="Davis R.W."/>
        </authorList>
    </citation>
    <scope>NUCLEOTIDE SEQUENCE [LARGE SCALE GENOMIC DNA]</scope>
    <source>
        <strain>cv. Columbia</strain>
    </source>
</reference>
<reference key="2">
    <citation type="journal article" date="2017" name="Plant J.">
        <title>Araport11: a complete reannotation of the Arabidopsis thaliana reference genome.</title>
        <authorList>
            <person name="Cheng C.Y."/>
            <person name="Krishnakumar V."/>
            <person name="Chan A.P."/>
            <person name="Thibaud-Nissen F."/>
            <person name="Schobel S."/>
            <person name="Town C.D."/>
        </authorList>
    </citation>
    <scope>GENOME REANNOTATION</scope>
    <source>
        <strain>cv. Columbia</strain>
    </source>
</reference>
<reference key="3">
    <citation type="journal article" date="2003" name="Science">
        <title>Empirical analysis of transcriptional activity in the Arabidopsis genome.</title>
        <authorList>
            <person name="Yamada K."/>
            <person name="Lim J."/>
            <person name="Dale J.M."/>
            <person name="Chen H."/>
            <person name="Shinn P."/>
            <person name="Palm C.J."/>
            <person name="Southwick A.M."/>
            <person name="Wu H.C."/>
            <person name="Kim C.J."/>
            <person name="Nguyen M."/>
            <person name="Pham P.K."/>
            <person name="Cheuk R.F."/>
            <person name="Karlin-Newmann G."/>
            <person name="Liu S.X."/>
            <person name="Lam B."/>
            <person name="Sakano H."/>
            <person name="Wu T."/>
            <person name="Yu G."/>
            <person name="Miranda M."/>
            <person name="Quach H.L."/>
            <person name="Tripp M."/>
            <person name="Chang C.H."/>
            <person name="Lee J.M."/>
            <person name="Toriumi M.J."/>
            <person name="Chan M.M."/>
            <person name="Tang C.C."/>
            <person name="Onodera C.S."/>
            <person name="Deng J.M."/>
            <person name="Akiyama K."/>
            <person name="Ansari Y."/>
            <person name="Arakawa T."/>
            <person name="Banh J."/>
            <person name="Banno F."/>
            <person name="Bowser L."/>
            <person name="Brooks S.Y."/>
            <person name="Carninci P."/>
            <person name="Chao Q."/>
            <person name="Choy N."/>
            <person name="Enju A."/>
            <person name="Goldsmith A.D."/>
            <person name="Gurjal M."/>
            <person name="Hansen N.F."/>
            <person name="Hayashizaki Y."/>
            <person name="Johnson-Hopson C."/>
            <person name="Hsuan V.W."/>
            <person name="Iida K."/>
            <person name="Karnes M."/>
            <person name="Khan S."/>
            <person name="Koesema E."/>
            <person name="Ishida J."/>
            <person name="Jiang P.X."/>
            <person name="Jones T."/>
            <person name="Kawai J."/>
            <person name="Kamiya A."/>
            <person name="Meyers C."/>
            <person name="Nakajima M."/>
            <person name="Narusaka M."/>
            <person name="Seki M."/>
            <person name="Sakurai T."/>
            <person name="Satou M."/>
            <person name="Tamse R."/>
            <person name="Vaysberg M."/>
            <person name="Wallender E.K."/>
            <person name="Wong C."/>
            <person name="Yamamura Y."/>
            <person name="Yuan S."/>
            <person name="Shinozaki K."/>
            <person name="Davis R.W."/>
            <person name="Theologis A."/>
            <person name="Ecker J.R."/>
        </authorList>
    </citation>
    <scope>NUCLEOTIDE SEQUENCE [LARGE SCALE MRNA]</scope>
    <source>
        <strain>cv. Columbia</strain>
    </source>
</reference>
<reference key="4">
    <citation type="submission" date="2006-07" db="EMBL/GenBank/DDBJ databases">
        <title>Large-scale analysis of RIKEN Arabidopsis full-length (RAFL) cDNAs.</title>
        <authorList>
            <person name="Totoki Y."/>
            <person name="Seki M."/>
            <person name="Ishida J."/>
            <person name="Nakajima M."/>
            <person name="Enju A."/>
            <person name="Kamiya A."/>
            <person name="Narusaka M."/>
            <person name="Shin-i T."/>
            <person name="Nakagawa M."/>
            <person name="Sakamoto N."/>
            <person name="Oishi K."/>
            <person name="Kohara Y."/>
            <person name="Kobayashi M."/>
            <person name="Toyoda A."/>
            <person name="Sakaki Y."/>
            <person name="Sakurai T."/>
            <person name="Iida K."/>
            <person name="Akiyama K."/>
            <person name="Satou M."/>
            <person name="Toyoda T."/>
            <person name="Konagaya A."/>
            <person name="Carninci P."/>
            <person name="Kawai J."/>
            <person name="Hayashizaki Y."/>
            <person name="Shinozaki K."/>
        </authorList>
    </citation>
    <scope>NUCLEOTIDE SEQUENCE [LARGE SCALE MRNA]</scope>
    <source>
        <strain>cv. Columbia</strain>
    </source>
</reference>
<reference key="5">
    <citation type="journal article" date="2003" name="Curr. Opin. Plant Biol.">
        <title>The oxidative pentose phosphate pathway: structure and organisation.</title>
        <authorList>
            <person name="Kruger N.J."/>
            <person name="von Schaewen A."/>
        </authorList>
    </citation>
    <scope>REVIEW</scope>
</reference>
<reference key="6">
    <citation type="journal article" date="2007" name="BMC Genomics">
        <title>Sequence-indexed mutations in maize using the UniformMu transposon-tagging population.</title>
        <authorList>
            <person name="Settles A.M."/>
            <person name="Holding D.R."/>
            <person name="Tan B.C."/>
            <person name="Latshaw S.P."/>
            <person name="Liu J."/>
            <person name="Suzuki M."/>
            <person name="Li L."/>
            <person name="O'Brien B.A."/>
            <person name="Fajardo D.S."/>
            <person name="Wroclawska E."/>
            <person name="Tseung C.W."/>
            <person name="Lai J."/>
            <person name="Hunter C.T. III"/>
            <person name="Avigne W.T."/>
            <person name="Baier J."/>
            <person name="Messing J."/>
            <person name="Hannah L.C."/>
            <person name="Koch K.E."/>
            <person name="Becraft P.W."/>
            <person name="Larkins B.A."/>
            <person name="McCarty D.R."/>
        </authorList>
    </citation>
    <scope>GENE FAMILY</scope>
</reference>
<reference key="7">
    <citation type="journal article" date="2012" name="Mol. Cell. Proteomics">
        <title>Comparative large-scale characterisation of plant vs. mammal proteins reveals similar and idiosyncratic N-alpha acetylation features.</title>
        <authorList>
            <person name="Bienvenut W.V."/>
            <person name="Sumpton D."/>
            <person name="Martinez A."/>
            <person name="Lilla S."/>
            <person name="Espagne C."/>
            <person name="Meinnel T."/>
            <person name="Giglione C."/>
        </authorList>
    </citation>
    <scope>ACETYLATION [LARGE SCALE ANALYSIS] AT MET-1</scope>
    <scope>IDENTIFICATION BY MASS SPECTROMETRY [LARGE SCALE ANALYSIS]</scope>
</reference>
<reference key="8">
    <citation type="journal article" date="2016" name="Plant Physiol.">
        <title>Defects in peroxisomal 6-phosphogluconate dehydrogenase isoform PGD2 prevent gametophytic interaction in Arabidopsis thaliana.</title>
        <authorList>
            <person name="Hoelscher C."/>
            <person name="Lutterbey M.C."/>
            <person name="Lansing H."/>
            <person name="Meyer T."/>
            <person name="Fischer K."/>
            <person name="von Schaewen A."/>
        </authorList>
    </citation>
    <scope>SUBCELLULAR LOCATION</scope>
</reference>
<reference key="9">
    <citation type="journal article" date="2016" name="Plant Signal. Behav.">
        <title>Analysis of homo- and hetero-dimerization among the three 6-phosphogluconate dehydrogenase isoforms of Arabidopsis.</title>
        <authorList>
            <person name="Lutterbey M.C."/>
            <person name="von Schaewen A."/>
        </authorList>
    </citation>
    <scope>HOMODIMERIZATION</scope>
    <scope>HETERODIMERIZATION</scope>
</reference>
<evidence type="ECO:0000250" key="1">
    <source>
        <dbReference type="UniProtKB" id="P96789"/>
    </source>
</evidence>
<evidence type="ECO:0000250" key="2">
    <source>
        <dbReference type="UniProtKB" id="Q9FWA3"/>
    </source>
</evidence>
<evidence type="ECO:0000269" key="3">
    <source>
    </source>
</evidence>
<evidence type="ECO:0000269" key="4">
    <source>
    </source>
</evidence>
<evidence type="ECO:0000303" key="5">
    <source>
    </source>
</evidence>
<evidence type="ECO:0000305" key="6"/>
<evidence type="ECO:0000312" key="7">
    <source>
        <dbReference type="Araport" id="AT1G64190"/>
    </source>
</evidence>
<evidence type="ECO:0000312" key="8">
    <source>
        <dbReference type="EMBL" id="AAF24560.1"/>
    </source>
</evidence>
<evidence type="ECO:0007744" key="9">
    <source>
    </source>
</evidence>